<protein>
    <recommendedName>
        <fullName>Uncharacterized protein C45G9.10</fullName>
    </recommendedName>
</protein>
<comment type="alternative products">
    <event type="alternative splicing"/>
    <isoform>
        <id>Q09281-1</id>
        <name>a</name>
        <sequence type="displayed"/>
    </isoform>
    <isoform>
        <id>Q09281-2</id>
        <name>b</name>
        <sequence type="described" ref="VSP_014362"/>
    </isoform>
</comment>
<organism>
    <name type="scientific">Caenorhabditis elegans</name>
    <dbReference type="NCBI Taxonomy" id="6239"/>
    <lineage>
        <taxon>Eukaryota</taxon>
        <taxon>Metazoa</taxon>
        <taxon>Ecdysozoa</taxon>
        <taxon>Nematoda</taxon>
        <taxon>Chromadorea</taxon>
        <taxon>Rhabditida</taxon>
        <taxon>Rhabditina</taxon>
        <taxon>Rhabditomorpha</taxon>
        <taxon>Rhabditoidea</taxon>
        <taxon>Rhabditidae</taxon>
        <taxon>Peloderinae</taxon>
        <taxon>Caenorhabditis</taxon>
    </lineage>
</organism>
<proteinExistence type="predicted"/>
<evidence type="ECO:0000305" key="1"/>
<keyword id="KW-0025">Alternative splicing</keyword>
<keyword id="KW-1185">Reference proteome</keyword>
<dbReference type="EMBL" id="FO080873">
    <property type="protein sequence ID" value="CCD67398.1"/>
    <property type="molecule type" value="Genomic_DNA"/>
</dbReference>
<dbReference type="EMBL" id="FO080873">
    <property type="protein sequence ID" value="CCD67399.1"/>
    <property type="molecule type" value="Genomic_DNA"/>
</dbReference>
<dbReference type="PIR" id="F88448">
    <property type="entry name" value="F88448"/>
</dbReference>
<dbReference type="RefSeq" id="NP_741127.1">
    <molecule id="Q09281-1"/>
    <property type="nucleotide sequence ID" value="NM_171113.4"/>
</dbReference>
<dbReference type="RefSeq" id="NP_741128.2">
    <molecule id="Q09281-2"/>
    <property type="nucleotide sequence ID" value="NM_171114.6"/>
</dbReference>
<dbReference type="BioGRID" id="40921">
    <property type="interactions" value="2"/>
</dbReference>
<dbReference type="PaxDb" id="6239-C45G9.10a"/>
<dbReference type="PeptideAtlas" id="Q09281"/>
<dbReference type="EnsemblMetazoa" id="C45G9.10a.1">
    <molecule id="Q09281-1"/>
    <property type="protein sequence ID" value="C45G9.10a.1"/>
    <property type="gene ID" value="WBGene00016681"/>
</dbReference>
<dbReference type="EnsemblMetazoa" id="C45G9.10b.1">
    <molecule id="Q09281-2"/>
    <property type="protein sequence ID" value="C45G9.10b.1"/>
    <property type="gene ID" value="WBGene00016681"/>
</dbReference>
<dbReference type="GeneID" id="175688"/>
<dbReference type="KEGG" id="cel:CELE_C45G9.10"/>
<dbReference type="UCSC" id="C45G9.10b">
    <molecule id="Q09281-1"/>
    <property type="organism name" value="c. elegans"/>
</dbReference>
<dbReference type="AGR" id="WB:WBGene00016681"/>
<dbReference type="CTD" id="175688"/>
<dbReference type="WormBase" id="C45G9.10a">
    <molecule id="Q09281-1"/>
    <property type="protein sequence ID" value="CE01851"/>
    <property type="gene ID" value="WBGene00016681"/>
</dbReference>
<dbReference type="WormBase" id="C45G9.10b">
    <molecule id="Q09281-2"/>
    <property type="protein sequence ID" value="CE37887"/>
    <property type="gene ID" value="WBGene00016681"/>
</dbReference>
<dbReference type="eggNOG" id="ENOG502TJ9S">
    <property type="taxonomic scope" value="Eukaryota"/>
</dbReference>
<dbReference type="HOGENOM" id="CLU_349925_0_0_1"/>
<dbReference type="InParanoid" id="Q09281"/>
<dbReference type="OrthoDB" id="5879046at2759"/>
<dbReference type="PRO" id="PR:Q09281"/>
<dbReference type="Proteomes" id="UP000001940">
    <property type="component" value="Chromosome III"/>
</dbReference>
<dbReference type="Bgee" id="WBGene00016681">
    <property type="expression patterns" value="Expressed in adult organism"/>
</dbReference>
<accession>Q09281</accession>
<accession>Q5LK45</accession>
<sequence>MVLWNLFVFATSVILLAEGTFDNCNNGLLTDKILKITSPHGNVSVWDINEVIVFGEQESGKLSLILPKQFSIKLEKVDRTFLNVFVLKPIRDDYFHNVVIEYIVSKEWHPSLQFDLQSIHLKIVDDRSGQSKDLILLYDLRAEGQQTSKILLAPNKRDPKCQRPAVMDTIHYSQVFVQNAMRNRSHVSSGSRCTIAFLLNTNGDFENYVTSKNDEIRILNYTKIINANEYAYILVEFETLKPGKAEFNVVQKQISNKKTREFYGVPITIVPGFIDFWKSSEFSNENLNPNEQISIFKTFLYDPTENKALSFDGNEEVININRPSTNYSELVFVFKTENKHFFQFAMQSQETGIFYRIFKHDSNTIITIPFDGIRNELSEENLRLAYCYDTMDFYNVKITTDGVQNSNNIVQMKKKSTNSAIESIWKLIPHRFDYYDVTDMIYYEEHDHGLLRFDVGENMITEVKKTYFKTTLRETLVDKYPILNFGEQFPYTNTSVDIIISNNNSKVIETASVQINGYKSGSYIRRIGNPVYYDYIFINYFNSSEYWNVDESVGGIYMIFLNDPFRKKSIGFKPDENNNFDIQRPSTDYSDLVVISVNKTTKNCDPAITVRSLETGLIYEHAQYFNPMVFSIRFDGIRNELPVEHLSIERFDTVYHVKITNKHVSIGYTSEVNSVFNGVWEKQENACTAVAEVGVHKYYINGETIILEEKQSGSLIFDVPKNAIVTILISSSKCSDLDVNREFANKFSYQVLENVCPDSKGYFDITVIVKDSNINQNFRVHYQIGSRTFERPQTTSPTYIPVTTSYPPTTNPPSPALPNLIDFLNKERENVNFKYDSTELAMICSYEIFENGTTTITRVLPVNGTYTIAKYLGAKTTGIAFFINKSDKTEAYRLTEKSITMGFENSVTSENHEGNEWIVTSEFQGERKNLKEESLIATLENLNSKRKTEVNVQVKAYFKSFLDAKFKKLSS</sequence>
<name>YQIA_CAEEL</name>
<feature type="chain" id="PRO_0000065242" description="Uncharacterized protein C45G9.10">
    <location>
        <begin position="1"/>
        <end position="971"/>
    </location>
</feature>
<feature type="splice variant" id="VSP_014362" description="In isoform b." evidence="1">
    <location>
        <begin position="1"/>
        <end position="166"/>
    </location>
</feature>
<gene>
    <name type="ORF">C45G9.10</name>
</gene>
<reference key="1">
    <citation type="journal article" date="1998" name="Science">
        <title>Genome sequence of the nematode C. elegans: a platform for investigating biology.</title>
        <authorList>
            <consortium name="The C. elegans sequencing consortium"/>
        </authorList>
    </citation>
    <scope>NUCLEOTIDE SEQUENCE [LARGE SCALE GENOMIC DNA]</scope>
    <scope>ALTERNATIVE SPLICING</scope>
    <source>
        <strain>Bristol N2</strain>
    </source>
</reference>